<protein>
    <recommendedName>
        <fullName>Glutamate receptor U1</fullName>
    </recommendedName>
    <alternativeName>
        <fullName>Kainate-binding protein</fullName>
    </alternativeName>
    <alternativeName>
        <fullName>Unitary non-NMDA glutamate receptor subunit 1</fullName>
    </alternativeName>
    <alternativeName>
        <fullName>XENU1</fullName>
    </alternativeName>
</protein>
<reference key="1">
    <citation type="journal article" date="1996" name="Recept. Channels">
        <title>A unitary non-NMDA receptor short subunit from Xenopus: DNA cloning and expression.</title>
        <authorList>
            <person name="Ishimaru H."/>
            <person name="Kamboj R."/>
            <person name="Ambrosini A."/>
            <person name="Henley J.M."/>
            <person name="Soloviev M.M."/>
            <person name="Sudan H."/>
            <person name="Rossier J."/>
            <person name="Abutidze K."/>
            <person name="Rampersad V."/>
            <person name="Usherwood P.N.R."/>
            <person name="Bateson A.N."/>
            <person name="Barnard E.A."/>
        </authorList>
    </citation>
    <scope>NUCLEOTIDE SEQUENCE [MRNA]</scope>
    <source>
        <tissue>Brain</tissue>
    </source>
</reference>
<reference key="2">
    <citation type="submission" date="2005-05" db="EMBL/GenBank/DDBJ databases">
        <authorList>
            <person name="Bull L."/>
            <person name="Hollmann M."/>
        </authorList>
    </citation>
    <scope>NUCLEOTIDE SEQUENCE [MRNA]</scope>
</reference>
<feature type="signal peptide" evidence="2">
    <location>
        <begin position="1"/>
        <end position="17"/>
    </location>
</feature>
<feature type="chain" id="PRO_0000011559" description="Glutamate receptor U1">
    <location>
        <begin position="18"/>
        <end position="479"/>
    </location>
</feature>
<feature type="topological domain" description="Extracellular" evidence="2">
    <location>
        <begin position="18"/>
        <end position="163"/>
    </location>
</feature>
<feature type="transmembrane region" description="Helical" evidence="2">
    <location>
        <begin position="164"/>
        <end position="184"/>
    </location>
</feature>
<feature type="topological domain" description="Cytoplasmic" evidence="2">
    <location>
        <begin position="185"/>
        <end position="229"/>
    </location>
</feature>
<feature type="transmembrane region" description="Helical" evidence="2">
    <location>
        <begin position="230"/>
        <end position="250"/>
    </location>
</feature>
<feature type="topological domain" description="Extracellular" evidence="2">
    <location>
        <begin position="251"/>
        <end position="414"/>
    </location>
</feature>
<feature type="transmembrane region" description="Helical" evidence="2">
    <location>
        <begin position="415"/>
        <end position="435"/>
    </location>
</feature>
<feature type="topological domain" description="Cytoplasmic" evidence="2">
    <location>
        <begin position="436"/>
        <end position="479"/>
    </location>
</feature>
<feature type="glycosylation site" description="N-linked (GlcNAc...) asparagine" evidence="3">
    <location>
        <position position="79"/>
    </location>
</feature>
<feature type="glycosylation site" description="N-linked (GlcNAc...) asparagine" evidence="3">
    <location>
        <position position="282"/>
    </location>
</feature>
<gene>
    <name type="primary">kbp</name>
</gene>
<accession>Q91756</accession>
<accession>Q4PKI4</accession>
<keyword id="KW-1003">Cell membrane</keyword>
<keyword id="KW-0325">Glycoprotein</keyword>
<keyword id="KW-0407">Ion channel</keyword>
<keyword id="KW-0406">Ion transport</keyword>
<keyword id="KW-1071">Ligand-gated ion channel</keyword>
<keyword id="KW-0472">Membrane</keyword>
<keyword id="KW-0628">Postsynaptic cell membrane</keyword>
<keyword id="KW-0675">Receptor</keyword>
<keyword id="KW-1185">Reference proteome</keyword>
<keyword id="KW-0732">Signal</keyword>
<keyword id="KW-0770">Synapse</keyword>
<keyword id="KW-0812">Transmembrane</keyword>
<keyword id="KW-1133">Transmembrane helix</keyword>
<keyword id="KW-0813">Transport</keyword>
<organism>
    <name type="scientific">Xenopus laevis</name>
    <name type="common">African clawed frog</name>
    <dbReference type="NCBI Taxonomy" id="8355"/>
    <lineage>
        <taxon>Eukaryota</taxon>
        <taxon>Metazoa</taxon>
        <taxon>Chordata</taxon>
        <taxon>Craniata</taxon>
        <taxon>Vertebrata</taxon>
        <taxon>Euteleostomi</taxon>
        <taxon>Amphibia</taxon>
        <taxon>Batrachia</taxon>
        <taxon>Anura</taxon>
        <taxon>Pipoidea</taxon>
        <taxon>Pipidae</taxon>
        <taxon>Xenopodinae</taxon>
        <taxon>Xenopus</taxon>
        <taxon>Xenopus</taxon>
    </lineage>
</organism>
<dbReference type="EMBL" id="X93491">
    <property type="protein sequence ID" value="CAA63760.1"/>
    <property type="molecule type" value="mRNA"/>
</dbReference>
<dbReference type="EMBL" id="DQ073428">
    <property type="protein sequence ID" value="AAY81921.1"/>
    <property type="molecule type" value="mRNA"/>
</dbReference>
<dbReference type="RefSeq" id="NP_001081086.2">
    <property type="nucleotide sequence ID" value="NM_001087617.1"/>
</dbReference>
<dbReference type="SMR" id="Q91756"/>
<dbReference type="GlyCosmos" id="Q91756">
    <property type="glycosylation" value="2 sites, No reported glycans"/>
</dbReference>
<dbReference type="GeneID" id="394374"/>
<dbReference type="KEGG" id="xla:394374"/>
<dbReference type="AGR" id="Xenbase:XB-GENE-18005836"/>
<dbReference type="CTD" id="394374"/>
<dbReference type="Xenbase" id="XB-GENE-18005836">
    <property type="gene designation" value="grik5l.L"/>
</dbReference>
<dbReference type="OMA" id="YEHMERK"/>
<dbReference type="OrthoDB" id="5984008at2759"/>
<dbReference type="Proteomes" id="UP000186698">
    <property type="component" value="Chromosome 7L"/>
</dbReference>
<dbReference type="Bgee" id="394374">
    <property type="expression patterns" value="Expressed in brain and 9 other cell types or tissues"/>
</dbReference>
<dbReference type="GO" id="GO:0032281">
    <property type="term" value="C:AMPA glutamate receptor complex"/>
    <property type="evidence" value="ECO:0000318"/>
    <property type="project" value="GO_Central"/>
</dbReference>
<dbReference type="GO" id="GO:0043197">
    <property type="term" value="C:dendritic spine"/>
    <property type="evidence" value="ECO:0000318"/>
    <property type="project" value="GO_Central"/>
</dbReference>
<dbReference type="GO" id="GO:0005886">
    <property type="term" value="C:plasma membrane"/>
    <property type="evidence" value="ECO:0000318"/>
    <property type="project" value="GO_Central"/>
</dbReference>
<dbReference type="GO" id="GO:0098839">
    <property type="term" value="C:postsynaptic density membrane"/>
    <property type="evidence" value="ECO:0000318"/>
    <property type="project" value="GO_Central"/>
</dbReference>
<dbReference type="GO" id="GO:0004971">
    <property type="term" value="F:AMPA glutamate receptor activity"/>
    <property type="evidence" value="ECO:0000318"/>
    <property type="project" value="GO_Central"/>
</dbReference>
<dbReference type="GO" id="GO:1904315">
    <property type="term" value="F:transmitter-gated monoatomic ion channel activity involved in regulation of postsynaptic membrane potential"/>
    <property type="evidence" value="ECO:0000318"/>
    <property type="project" value="GO_Central"/>
</dbReference>
<dbReference type="GO" id="GO:0050804">
    <property type="term" value="P:modulation of chemical synaptic transmission"/>
    <property type="evidence" value="ECO:0000318"/>
    <property type="project" value="GO_Central"/>
</dbReference>
<dbReference type="GO" id="GO:0035249">
    <property type="term" value="P:synaptic transmission, glutamatergic"/>
    <property type="evidence" value="ECO:0000318"/>
    <property type="project" value="GO_Central"/>
</dbReference>
<dbReference type="CDD" id="cd13685">
    <property type="entry name" value="PBP2_iGluR_non_NMDA_like"/>
    <property type="match status" value="1"/>
</dbReference>
<dbReference type="FunFam" id="1.10.287.70:FF:000143">
    <property type="entry name" value="Probable glutamate receptor"/>
    <property type="match status" value="1"/>
</dbReference>
<dbReference type="FunFam" id="3.40.190.10:FF:000364">
    <property type="entry name" value="Si:dkey-183j2.10"/>
    <property type="match status" value="1"/>
</dbReference>
<dbReference type="Gene3D" id="1.10.287.70">
    <property type="match status" value="1"/>
</dbReference>
<dbReference type="Gene3D" id="3.40.190.10">
    <property type="entry name" value="Periplasmic binding protein-like II"/>
    <property type="match status" value="1"/>
</dbReference>
<dbReference type="InterPro" id="IPR019594">
    <property type="entry name" value="Glu/Gly-bd"/>
</dbReference>
<dbReference type="InterPro" id="IPR001508">
    <property type="entry name" value="Iono_Glu_rcpt_met"/>
</dbReference>
<dbReference type="InterPro" id="IPR015683">
    <property type="entry name" value="Ionotropic_Glu_rcpt"/>
</dbReference>
<dbReference type="InterPro" id="IPR001320">
    <property type="entry name" value="Iontro_rcpt_C"/>
</dbReference>
<dbReference type="PANTHER" id="PTHR18966">
    <property type="entry name" value="IONOTROPIC GLUTAMATE RECEPTOR"/>
    <property type="match status" value="1"/>
</dbReference>
<dbReference type="Pfam" id="PF00060">
    <property type="entry name" value="Lig_chan"/>
    <property type="match status" value="1"/>
</dbReference>
<dbReference type="Pfam" id="PF10613">
    <property type="entry name" value="Lig_chan-Glu_bd"/>
    <property type="match status" value="1"/>
</dbReference>
<dbReference type="PRINTS" id="PR00177">
    <property type="entry name" value="NMDARECEPTOR"/>
</dbReference>
<dbReference type="SMART" id="SM00918">
    <property type="entry name" value="Lig_chan-Glu_bd"/>
    <property type="match status" value="1"/>
</dbReference>
<dbReference type="SMART" id="SM00079">
    <property type="entry name" value="PBPe"/>
    <property type="match status" value="1"/>
</dbReference>
<dbReference type="SUPFAM" id="SSF53850">
    <property type="entry name" value="Periplasmic binding protein-like II"/>
    <property type="match status" value="1"/>
</dbReference>
<dbReference type="SUPFAM" id="SSF81324">
    <property type="entry name" value="Voltage-gated potassium channels"/>
    <property type="match status" value="1"/>
</dbReference>
<evidence type="ECO:0000250" key="1"/>
<evidence type="ECO:0000255" key="2"/>
<evidence type="ECO:0000255" key="3">
    <source>
        <dbReference type="PROSITE-ProRule" id="PRU00498"/>
    </source>
</evidence>
<evidence type="ECO:0000305" key="4"/>
<name>GLRK_XENLA</name>
<comment type="function">
    <text evidence="1">Receptor for glutamate. L-glutamate acts as an excitatory neurotransmitter at many synapses in the central nervous system. The postsynaptic actions of Glu are mediated by a variety of receptors that are named according to their selective agonists (By similarity). This receptor binds domoate &gt; kainate &gt; AMPA &gt; NBQX &gt; glutamate.</text>
</comment>
<comment type="subunit">
    <text>Homomeric.</text>
</comment>
<comment type="subcellular location">
    <subcellularLocation>
        <location>Cell membrane</location>
        <topology>Multi-pass membrane protein</topology>
    </subcellularLocation>
    <subcellularLocation>
        <location>Postsynaptic cell membrane</location>
        <topology>Multi-pass membrane protein</topology>
    </subcellularLocation>
</comment>
<comment type="similarity">
    <text evidence="4">Belongs to the glutamate-gated ion channel (TC 1.A.10.1) family.</text>
</comment>
<sequence>MEKSLLFLFAVTLLSVGCTDAGESKGSIHKEKERSKRQALKHLTVTTIMEQPFSMKSESGMEGFCIDLLSELSQSLGFNYTIKEVKDGRYGAKDQDGNWNGMVGEVLRKEVDLAVAPLTITANRERELAFTKPFMQTGISILLRKEDASENSFLFGFLTPFSKETWIGILVAYMVTSLCLFLVGRLSPCEWTELSTEQNNFTFLNSLWFGAGAFTLQGAEPHPKSVSARIIAVIWWIFSIVLVAAYIASFAAFLNSDSVQTTNIQTFEDLVNQRTLEFGTINSSSTFQFFKNSKNPTYRMIYEYMDKRKDELLVKSFAEGVRRVRESNYAFLGESVMQDIMVAKHCELARAPQIIAGRGYGIAASIDSQLIKQLSIAILEQTESGNIEYLRKKWWDNTCSMKRSAGWNPVQPHTLGGIFLILGIGLALGVIAALIELVLKARNNADQQKKSCCSAFSEEMGERLGTNKENQGAVDSVKS</sequence>
<proteinExistence type="evidence at transcript level"/>